<evidence type="ECO:0000255" key="1">
    <source>
        <dbReference type="HAMAP-Rule" id="MF_01432"/>
    </source>
</evidence>
<dbReference type="EC" id="3.2.-.-" evidence="1"/>
<dbReference type="EMBL" id="CP000857">
    <property type="protein sequence ID" value="ACN44247.1"/>
    <property type="molecule type" value="Genomic_DNA"/>
</dbReference>
<dbReference type="RefSeq" id="WP_000127279.1">
    <property type="nucleotide sequence ID" value="NC_012125.1"/>
</dbReference>
<dbReference type="SMR" id="C0Q4J2"/>
<dbReference type="KEGG" id="sei:SPC_0055"/>
<dbReference type="HOGENOM" id="CLU_036838_2_2_6"/>
<dbReference type="Proteomes" id="UP000001599">
    <property type="component" value="Chromosome"/>
</dbReference>
<dbReference type="GO" id="GO:0005829">
    <property type="term" value="C:cytosol"/>
    <property type="evidence" value="ECO:0007669"/>
    <property type="project" value="TreeGrafter"/>
</dbReference>
<dbReference type="GO" id="GO:0008477">
    <property type="term" value="F:purine nucleosidase activity"/>
    <property type="evidence" value="ECO:0007669"/>
    <property type="project" value="TreeGrafter"/>
</dbReference>
<dbReference type="GO" id="GO:0006144">
    <property type="term" value="P:purine nucleobase metabolic process"/>
    <property type="evidence" value="ECO:0007669"/>
    <property type="project" value="UniProtKB-UniRule"/>
</dbReference>
<dbReference type="GO" id="GO:0006152">
    <property type="term" value="P:purine nucleoside catabolic process"/>
    <property type="evidence" value="ECO:0007669"/>
    <property type="project" value="TreeGrafter"/>
</dbReference>
<dbReference type="GO" id="GO:0006206">
    <property type="term" value="P:pyrimidine nucleobase metabolic process"/>
    <property type="evidence" value="ECO:0007669"/>
    <property type="project" value="UniProtKB-UniRule"/>
</dbReference>
<dbReference type="CDD" id="cd02651">
    <property type="entry name" value="nuc_hydro_IU_UC_XIUA"/>
    <property type="match status" value="1"/>
</dbReference>
<dbReference type="FunFam" id="3.90.245.10:FF:000002">
    <property type="entry name" value="Non-specific ribonucleoside hydrolase RihC"/>
    <property type="match status" value="1"/>
</dbReference>
<dbReference type="Gene3D" id="3.90.245.10">
    <property type="entry name" value="Ribonucleoside hydrolase-like"/>
    <property type="match status" value="1"/>
</dbReference>
<dbReference type="HAMAP" id="MF_01432">
    <property type="entry name" value="Nucleosid_hydro_RihC"/>
    <property type="match status" value="1"/>
</dbReference>
<dbReference type="InterPro" id="IPR001910">
    <property type="entry name" value="Inosine/uridine_hydrolase_dom"/>
</dbReference>
<dbReference type="InterPro" id="IPR023186">
    <property type="entry name" value="IUNH"/>
</dbReference>
<dbReference type="InterPro" id="IPR022976">
    <property type="entry name" value="Nucleosid_hydro_RihC_nonspecif"/>
</dbReference>
<dbReference type="InterPro" id="IPR036452">
    <property type="entry name" value="Ribo_hydro-like"/>
</dbReference>
<dbReference type="NCBIfam" id="NF008036">
    <property type="entry name" value="PRK10768.1"/>
    <property type="match status" value="1"/>
</dbReference>
<dbReference type="PANTHER" id="PTHR12304">
    <property type="entry name" value="INOSINE-URIDINE PREFERRING NUCLEOSIDE HYDROLASE"/>
    <property type="match status" value="1"/>
</dbReference>
<dbReference type="PANTHER" id="PTHR12304:SF15">
    <property type="entry name" value="NON-SPECIFIC RIBONUCLEOSIDE HYDROLASE RIHC"/>
    <property type="match status" value="1"/>
</dbReference>
<dbReference type="Pfam" id="PF01156">
    <property type="entry name" value="IU_nuc_hydro"/>
    <property type="match status" value="1"/>
</dbReference>
<dbReference type="SUPFAM" id="SSF53590">
    <property type="entry name" value="Nucleoside hydrolase"/>
    <property type="match status" value="1"/>
</dbReference>
<gene>
    <name evidence="1" type="primary">rihC</name>
    <name type="ordered locus">SPC_0055</name>
</gene>
<accession>C0Q4J2</accession>
<comment type="function">
    <text evidence="1">Hydrolyzes both purine and pyrimidine ribonucleosides with a broad-substrate specificity.</text>
</comment>
<comment type="similarity">
    <text evidence="1">Belongs to the IUNH family. RihC subfamily.</text>
</comment>
<protein>
    <recommendedName>
        <fullName evidence="1">Non-specific ribonucleoside hydrolase RihC</fullName>
        <ecNumber evidence="1">3.2.-.-</ecNumber>
    </recommendedName>
    <alternativeName>
        <fullName evidence="1">Purine/pyrimidine ribonucleoside hydrolase</fullName>
    </alternativeName>
</protein>
<proteinExistence type="inferred from homology"/>
<keyword id="KW-0326">Glycosidase</keyword>
<keyword id="KW-0378">Hydrolase</keyword>
<name>RIHC_SALPC</name>
<sequence length="306" mass="33123">MTASLHIILDTDPGIDDAAAIAAALFAPQLDLQLITTVAGNVSVEKTTRNALQLLHFWNSDIPLAQGAATPLLRPLRDAAYVHGESGMEGYDFVDHQRQPLAKPAFIAIRDVLMNAPEPMTLVAIGPLTNIALLLMHYPECACNIRRLVLMGGSAGRGNFTPNAEFNIAVDPEAAALVFRSGLEIVMCGLDVTNQAMLSPDFLNKLPALNRTGKMLHSLFNHYRSGSMRTGVRMHDLCAIAWLVRPELFTLQSCFVAVETQGEYTAGTTVVDIEGRLGQPANAQVALALDVDGFRQWVAEVFAYAP</sequence>
<organism>
    <name type="scientific">Salmonella paratyphi C (strain RKS4594)</name>
    <dbReference type="NCBI Taxonomy" id="476213"/>
    <lineage>
        <taxon>Bacteria</taxon>
        <taxon>Pseudomonadati</taxon>
        <taxon>Pseudomonadota</taxon>
        <taxon>Gammaproteobacteria</taxon>
        <taxon>Enterobacterales</taxon>
        <taxon>Enterobacteriaceae</taxon>
        <taxon>Salmonella</taxon>
    </lineage>
</organism>
<feature type="chain" id="PRO_1000184899" description="Non-specific ribonucleoside hydrolase RihC">
    <location>
        <begin position="1"/>
        <end position="306"/>
    </location>
</feature>
<feature type="active site" evidence="1">
    <location>
        <position position="235"/>
    </location>
</feature>
<reference key="1">
    <citation type="journal article" date="2009" name="PLoS ONE">
        <title>Salmonella paratyphi C: genetic divergence from Salmonella choleraesuis and pathogenic convergence with Salmonella typhi.</title>
        <authorList>
            <person name="Liu W.-Q."/>
            <person name="Feng Y."/>
            <person name="Wang Y."/>
            <person name="Zou Q.-H."/>
            <person name="Chen F."/>
            <person name="Guo J.-T."/>
            <person name="Peng Y.-H."/>
            <person name="Jin Y."/>
            <person name="Li Y.-G."/>
            <person name="Hu S.-N."/>
            <person name="Johnston R.N."/>
            <person name="Liu G.-R."/>
            <person name="Liu S.-L."/>
        </authorList>
    </citation>
    <scope>NUCLEOTIDE SEQUENCE [LARGE SCALE GENOMIC DNA]</scope>
    <source>
        <strain>RKS4594</strain>
    </source>
</reference>